<feature type="chain" id="PRO_0000190638" description="4-hydroxy-3-methylbut-2-en-1-yl diphosphate synthase (ferredoxin)">
    <location>
        <begin position="1"/>
        <end position="402"/>
    </location>
</feature>
<feature type="binding site" evidence="1">
    <location>
        <position position="311"/>
    </location>
    <ligand>
        <name>[4Fe-4S] cluster</name>
        <dbReference type="ChEBI" id="CHEBI:49883"/>
    </ligand>
</feature>
<feature type="binding site" evidence="1">
    <location>
        <position position="314"/>
    </location>
    <ligand>
        <name>[4Fe-4S] cluster</name>
        <dbReference type="ChEBI" id="CHEBI:49883"/>
    </ligand>
</feature>
<feature type="binding site" evidence="1">
    <location>
        <position position="345"/>
    </location>
    <ligand>
        <name>[4Fe-4S] cluster</name>
        <dbReference type="ChEBI" id="CHEBI:49883"/>
    </ligand>
</feature>
<feature type="binding site" evidence="1">
    <location>
        <position position="352"/>
    </location>
    <ligand>
        <name>[4Fe-4S] cluster</name>
        <dbReference type="ChEBI" id="CHEBI:49883"/>
    </ligand>
</feature>
<name>ISPG_THEVB</name>
<evidence type="ECO:0000255" key="1">
    <source>
        <dbReference type="HAMAP-Rule" id="MF_00159"/>
    </source>
</evidence>
<evidence type="ECO:0000269" key="2">
    <source>
    </source>
</evidence>
<protein>
    <recommendedName>
        <fullName evidence="1">4-hydroxy-3-methylbut-2-en-1-yl diphosphate synthase (ferredoxin)</fullName>
        <ecNumber evidence="1 2">1.17.7.1</ecNumber>
    </recommendedName>
    <alternativeName>
        <fullName evidence="1">1-hydroxy-2-methyl-2-(E)-butenyl 4-diphosphate synthase</fullName>
    </alternativeName>
</protein>
<organism>
    <name type="scientific">Thermosynechococcus vestitus (strain NIES-2133 / IAM M-273 / BP-1)</name>
    <dbReference type="NCBI Taxonomy" id="197221"/>
    <lineage>
        <taxon>Bacteria</taxon>
        <taxon>Bacillati</taxon>
        <taxon>Cyanobacteriota</taxon>
        <taxon>Cyanophyceae</taxon>
        <taxon>Acaryochloridales</taxon>
        <taxon>Thermosynechococcaceae</taxon>
        <taxon>Thermosynechococcus</taxon>
    </lineage>
</organism>
<sequence length="402" mass="44192">MQTLPSPVQATPTETAIVRRKTRPVPIGSVVIGGGHPVAVQSMINEDTLDIEGSVAAIRRLHEIGCEIVRVTVPSLAHAKAMEEIRDRLYKTYKPVPLVADVHHNGMKIALEVAKYVDNVRINPGLYVFEKPKPNRTEYTQAEFDEIGAKIRETLEPLVISLRDQGKSMRIGVNHGSLAERMLFTYGDTPEGMVESALEFIRICESLNFYNLEISLKASRVPVMIAANRLMVKRMDELGMDYPLHLGVTEAGDGEYGRIKSTAGIATLLAEGIGDTIRVSLTEAPEKEIPVCYGILQALGLRRTMVEYVACPSCGRTLFNLEEVLHKVREATKHLTGLNIAVMGCIVNGPGEMADADYGYVGKQPGYISLYRGREEVKKVPEAEGVAALVELIKADGRWVDP</sequence>
<reference key="1">
    <citation type="journal article" date="2002" name="DNA Res.">
        <title>Complete genome structure of the thermophilic cyanobacterium Thermosynechococcus elongatus BP-1.</title>
        <authorList>
            <person name="Nakamura Y."/>
            <person name="Kaneko T."/>
            <person name="Sato S."/>
            <person name="Ikeuchi M."/>
            <person name="Katoh H."/>
            <person name="Sasamoto S."/>
            <person name="Watanabe A."/>
            <person name="Iriguchi M."/>
            <person name="Kawashima K."/>
            <person name="Kimura T."/>
            <person name="Kishida Y."/>
            <person name="Kiyokawa C."/>
            <person name="Kohara M."/>
            <person name="Matsumoto M."/>
            <person name="Matsuno A."/>
            <person name="Nakazaki N."/>
            <person name="Shimpo S."/>
            <person name="Sugimoto M."/>
            <person name="Takeuchi C."/>
            <person name="Yamada M."/>
            <person name="Tabata S."/>
        </authorList>
    </citation>
    <scope>NUCLEOTIDE SEQUENCE [LARGE SCALE GENOMIC DNA]</scope>
    <source>
        <strain>NIES-2133 / IAM M-273 / BP-1</strain>
    </source>
</reference>
<reference key="2">
    <citation type="journal article" date="2005" name="J. Biol. Chem.">
        <title>Cyanobacterial non-mevalonate pathway: (E)-4-hydroxy-3-methylbut-2-enyl diphosphate synthase interacts with ferredoxin in Thermosynechococcus elongatus BP-1.</title>
        <authorList>
            <person name="Okada K."/>
            <person name="Hase T."/>
        </authorList>
    </citation>
    <scope>FUNCTION</scope>
    <scope>CATALYTIC ACTIVITY</scope>
    <scope>COFACTOR</scope>
    <scope>INTERACTION WITH PETF</scope>
</reference>
<comment type="function">
    <text evidence="1 2">Converts 2C-methyl-D-erythritol 2,4-cyclodiphosphate (ME-2,4cPP) into 1-hydroxy-2-methyl-2-(E)-butenyl 4-diphosphate, using ferredoxin I (PetF) as the reducing agent.</text>
</comment>
<comment type="catalytic activity">
    <reaction evidence="1 2">
        <text>(2E)-4-hydroxy-3-methylbut-2-enyl diphosphate + 2 oxidized [2Fe-2S]-[ferredoxin] + H2O = 2-C-methyl-D-erythritol 2,4-cyclic diphosphate + 2 reduced [2Fe-2S]-[ferredoxin] + H(+)</text>
        <dbReference type="Rhea" id="RHEA:26119"/>
        <dbReference type="Rhea" id="RHEA-COMP:10000"/>
        <dbReference type="Rhea" id="RHEA-COMP:10001"/>
        <dbReference type="ChEBI" id="CHEBI:15377"/>
        <dbReference type="ChEBI" id="CHEBI:15378"/>
        <dbReference type="ChEBI" id="CHEBI:33737"/>
        <dbReference type="ChEBI" id="CHEBI:33738"/>
        <dbReference type="ChEBI" id="CHEBI:58483"/>
        <dbReference type="ChEBI" id="CHEBI:128753"/>
        <dbReference type="EC" id="1.17.7.1"/>
    </reaction>
</comment>
<comment type="cofactor">
    <cofactor evidence="1 2">
        <name>[4Fe-4S] cluster</name>
        <dbReference type="ChEBI" id="CHEBI:49883"/>
    </cofactor>
    <text evidence="1 2">Binds 1 [4Fe-4S] cluster.</text>
</comment>
<comment type="pathway">
    <text evidence="1">Isoprenoid biosynthesis; isopentenyl diphosphate biosynthesis via DXP pathway; isopentenyl diphosphate from 1-deoxy-D-xylulose 5-phosphate: step 5/6.</text>
</comment>
<comment type="interaction">
    <interactant intactId="EBI-766800">
        <id>Q8DK70</id>
    </interactant>
    <interactant intactId="EBI-766786">
        <id>P0A3C9</id>
        <label>petF1</label>
    </interactant>
    <organismsDiffer>false</organismsDiffer>
    <experiments>3</experiments>
</comment>
<comment type="similarity">
    <text evidence="1">Belongs to the IspG family.</text>
</comment>
<keyword id="KW-0004">4Fe-4S</keyword>
<keyword id="KW-0408">Iron</keyword>
<keyword id="KW-0411">Iron-sulfur</keyword>
<keyword id="KW-0414">Isoprene biosynthesis</keyword>
<keyword id="KW-0479">Metal-binding</keyword>
<keyword id="KW-0560">Oxidoreductase</keyword>
<keyword id="KW-1185">Reference proteome</keyword>
<gene>
    <name evidence="1" type="primary">ispG</name>
    <name type="ordered locus">tlr0996</name>
</gene>
<proteinExistence type="evidence at protein level"/>
<accession>Q8DK70</accession>
<dbReference type="EC" id="1.17.7.1" evidence="1 2"/>
<dbReference type="EMBL" id="BA000039">
    <property type="protein sequence ID" value="BAC08548.1"/>
    <property type="molecule type" value="Genomic_DNA"/>
</dbReference>
<dbReference type="RefSeq" id="NP_681786.1">
    <property type="nucleotide sequence ID" value="NC_004113.1"/>
</dbReference>
<dbReference type="RefSeq" id="WP_011056840.1">
    <property type="nucleotide sequence ID" value="NC_004113.1"/>
</dbReference>
<dbReference type="SMR" id="Q8DK70"/>
<dbReference type="IntAct" id="Q8DK70">
    <property type="interactions" value="1"/>
</dbReference>
<dbReference type="STRING" id="197221.gene:10747588"/>
<dbReference type="EnsemblBacteria" id="BAC08548">
    <property type="protein sequence ID" value="BAC08548"/>
    <property type="gene ID" value="BAC08548"/>
</dbReference>
<dbReference type="KEGG" id="tel:tlr0996"/>
<dbReference type="PATRIC" id="fig|197221.4.peg.1047"/>
<dbReference type="eggNOG" id="COG0821">
    <property type="taxonomic scope" value="Bacteria"/>
</dbReference>
<dbReference type="BRENDA" id="1.17.7.1">
    <property type="organism ID" value="7763"/>
</dbReference>
<dbReference type="UniPathway" id="UPA00056">
    <property type="reaction ID" value="UER00096"/>
</dbReference>
<dbReference type="Proteomes" id="UP000000440">
    <property type="component" value="Chromosome"/>
</dbReference>
<dbReference type="GO" id="GO:0051539">
    <property type="term" value="F:4 iron, 4 sulfur cluster binding"/>
    <property type="evidence" value="ECO:0000314"/>
    <property type="project" value="UniProtKB"/>
</dbReference>
<dbReference type="GO" id="GO:0046429">
    <property type="term" value="F:4-hydroxy-3-methylbut-2-en-1-yl diphosphate synthase activity (ferredoxin)"/>
    <property type="evidence" value="ECO:0007669"/>
    <property type="project" value="UniProtKB-UniRule"/>
</dbReference>
<dbReference type="GO" id="GO:0009055">
    <property type="term" value="F:electron transfer activity"/>
    <property type="evidence" value="ECO:0000304"/>
    <property type="project" value="UniProtKB"/>
</dbReference>
<dbReference type="GO" id="GO:0005506">
    <property type="term" value="F:iron ion binding"/>
    <property type="evidence" value="ECO:0007669"/>
    <property type="project" value="InterPro"/>
</dbReference>
<dbReference type="GO" id="GO:0019288">
    <property type="term" value="P:isopentenyl diphosphate biosynthetic process, methylerythritol 4-phosphate pathway"/>
    <property type="evidence" value="ECO:0007669"/>
    <property type="project" value="UniProtKB-UniRule"/>
</dbReference>
<dbReference type="GO" id="GO:0016114">
    <property type="term" value="P:terpenoid biosynthetic process"/>
    <property type="evidence" value="ECO:0007669"/>
    <property type="project" value="InterPro"/>
</dbReference>
<dbReference type="FunFam" id="3.20.20.20:FF:000005">
    <property type="entry name" value="4-hydroxy-3-methylbut-2-en-1-yl diphosphate synthase (flavodoxin)"/>
    <property type="match status" value="1"/>
</dbReference>
<dbReference type="FunFam" id="3.30.413.10:FF:000006">
    <property type="entry name" value="4-hydroxy-3-methylbut-2-en-1-yl diphosphate synthase (flavodoxin)"/>
    <property type="match status" value="1"/>
</dbReference>
<dbReference type="Gene3D" id="3.20.20.20">
    <property type="entry name" value="Dihydropteroate synthase-like"/>
    <property type="match status" value="1"/>
</dbReference>
<dbReference type="Gene3D" id="3.30.413.10">
    <property type="entry name" value="Sulfite Reductase Hemoprotein, domain 1"/>
    <property type="match status" value="1"/>
</dbReference>
<dbReference type="HAMAP" id="MF_00159">
    <property type="entry name" value="IspG"/>
    <property type="match status" value="1"/>
</dbReference>
<dbReference type="InterPro" id="IPR011005">
    <property type="entry name" value="Dihydropteroate_synth-like_sf"/>
</dbReference>
<dbReference type="InterPro" id="IPR016425">
    <property type="entry name" value="IspG_bac"/>
</dbReference>
<dbReference type="InterPro" id="IPR004588">
    <property type="entry name" value="IspG_bac-typ"/>
</dbReference>
<dbReference type="InterPro" id="IPR045854">
    <property type="entry name" value="NO2/SO3_Rdtase_4Fe4S_sf"/>
</dbReference>
<dbReference type="NCBIfam" id="TIGR00612">
    <property type="entry name" value="ispG_gcpE"/>
    <property type="match status" value="1"/>
</dbReference>
<dbReference type="NCBIfam" id="NF001540">
    <property type="entry name" value="PRK00366.1"/>
    <property type="match status" value="1"/>
</dbReference>
<dbReference type="PANTHER" id="PTHR30454">
    <property type="entry name" value="4-HYDROXY-3-METHYLBUT-2-EN-1-YL DIPHOSPHATE SYNTHASE"/>
    <property type="match status" value="1"/>
</dbReference>
<dbReference type="PANTHER" id="PTHR30454:SF0">
    <property type="entry name" value="4-HYDROXY-3-METHYLBUT-2-EN-1-YL DIPHOSPHATE SYNTHASE (FERREDOXIN), CHLOROPLASTIC"/>
    <property type="match status" value="1"/>
</dbReference>
<dbReference type="Pfam" id="PF04551">
    <property type="entry name" value="GcpE"/>
    <property type="match status" value="1"/>
</dbReference>
<dbReference type="PIRSF" id="PIRSF004640">
    <property type="entry name" value="IspG"/>
    <property type="match status" value="1"/>
</dbReference>
<dbReference type="SUPFAM" id="SSF56014">
    <property type="entry name" value="Nitrite and sulphite reductase 4Fe-4S domain-like"/>
    <property type="match status" value="1"/>
</dbReference>